<sequence length="423" mass="47873">MASALEQFVNSVRQLSAQGQMTQLCELINKSGELLAKNLSHLDTVLGALDVQEHSLGVLAVLFVKFSMPSVPDFETLFSQVQLFISTCNGEHIRYATDTFAGLCHQLTNALVERKQPLRGIGILKQAIDKMQMNTNQLTSIHADLCQLCLLAKCFKPALPYLDVDMMDICKENGAYDAKHFLCYYYYGGMIYTGLKNFERALYFYEQAITTPAMAVSHIMLESYKKYILVSLILLGKVQQLPKYTSQIVGRFIKPLSNAYHELAQVYSTNNPSELRNLVNKHSETFTRDNNMGLVKQCLSSLYKKNIQRLTKTFLTLSLQDMASRVQLSGPQEAEKYVLHMIEDGEIFASINQKDGMVSFHDNPEKYNNPAMLHNIDQEMLKCIELDERLKAMDQEITVNPQFVQKSMGSQEDDSGNKPSSYS</sequence>
<evidence type="ECO:0000250" key="1">
    <source>
        <dbReference type="UniProtKB" id="O88543"/>
    </source>
</evidence>
<evidence type="ECO:0000255" key="2">
    <source>
        <dbReference type="PROSITE-ProRule" id="PRU01185"/>
    </source>
</evidence>
<evidence type="ECO:0000256" key="3">
    <source>
        <dbReference type="SAM" id="MobiDB-lite"/>
    </source>
</evidence>
<evidence type="ECO:0000269" key="4">
    <source>
    </source>
</evidence>
<evidence type="ECO:0000269" key="5">
    <source>
    </source>
</evidence>
<evidence type="ECO:0000269" key="6">
    <source>
    </source>
</evidence>
<evidence type="ECO:0000269" key="7">
    <source>
    </source>
</evidence>
<evidence type="ECO:0000269" key="8">
    <source>
    </source>
</evidence>
<evidence type="ECO:0000269" key="9">
    <source>
    </source>
</evidence>
<evidence type="ECO:0000269" key="10">
    <source>
    </source>
</evidence>
<evidence type="ECO:0000269" key="11">
    <source>
    </source>
</evidence>
<evidence type="ECO:0000269" key="12">
    <source>
    </source>
</evidence>
<evidence type="ECO:0000269" key="13">
    <source>
    </source>
</evidence>
<evidence type="ECO:0000269" key="14">
    <source>
    </source>
</evidence>
<evidence type="ECO:0000269" key="15">
    <source ref="8"/>
</evidence>
<evidence type="ECO:0000303" key="16">
    <source>
    </source>
</evidence>
<evidence type="ECO:0000305" key="17"/>
<evidence type="ECO:0007744" key="18">
    <source>
    </source>
</evidence>
<evidence type="ECO:0007744" key="19">
    <source>
    </source>
</evidence>
<evidence type="ECO:0007744" key="20">
    <source>
    </source>
</evidence>
<evidence type="ECO:0007744" key="21">
    <source>
    </source>
</evidence>
<evidence type="ECO:0007744" key="22">
    <source>
    </source>
</evidence>
<evidence type="ECO:0007744" key="23">
    <source>
    </source>
</evidence>
<evidence type="ECO:0007744" key="24">
    <source>
    </source>
</evidence>
<name>CSN3_HUMAN</name>
<reference key="1">
    <citation type="journal article" date="1998" name="FASEB J.">
        <title>A novel protein complex involved in signal transduction possessing similarities to 26S proteasome subunits.</title>
        <authorList>
            <person name="Seeger M."/>
            <person name="Kraft R."/>
            <person name="Ferrell K."/>
            <person name="Bech-Otschir D."/>
            <person name="Dumdey R."/>
            <person name="Schade R."/>
            <person name="Gordon C."/>
            <person name="Naumann M."/>
            <person name="Dubiel W."/>
        </authorList>
    </citation>
    <scope>NUCLEOTIDE SEQUENCE [MRNA] (ISOFORM 1)</scope>
    <scope>PARTIAL PROTEIN SEQUENCE</scope>
    <scope>FUNCTION</scope>
    <scope>SUBCELLULAR LOCATION</scope>
    <source>
        <tissue>Cervix carcinoma</tissue>
    </source>
</reference>
<reference key="2">
    <citation type="journal article" date="1999" name="Genomics">
        <title>Subunit 3 of the COP9 signal transduction complex is conserved from plants to humans and maps within the Smith-Magenis syndrome critical region in 17p11.2.</title>
        <authorList>
            <person name="Potocki L."/>
            <person name="Chen K.-S."/>
            <person name="Lupski J.R."/>
        </authorList>
    </citation>
    <scope>NUCLEOTIDE SEQUENCE [MRNA] (ISOFORM 1)</scope>
    <scope>TISSUE SPECIFICITY</scope>
    <source>
        <tissue>Brain</tissue>
    </source>
</reference>
<reference key="3">
    <citation type="journal article" date="2004" name="Nat. Genet.">
        <title>Complete sequencing and characterization of 21,243 full-length human cDNAs.</title>
        <authorList>
            <person name="Ota T."/>
            <person name="Suzuki Y."/>
            <person name="Nishikawa T."/>
            <person name="Otsuki T."/>
            <person name="Sugiyama T."/>
            <person name="Irie R."/>
            <person name="Wakamatsu A."/>
            <person name="Hayashi K."/>
            <person name="Sato H."/>
            <person name="Nagai K."/>
            <person name="Kimura K."/>
            <person name="Makita H."/>
            <person name="Sekine M."/>
            <person name="Obayashi M."/>
            <person name="Nishi T."/>
            <person name="Shibahara T."/>
            <person name="Tanaka T."/>
            <person name="Ishii S."/>
            <person name="Yamamoto J."/>
            <person name="Saito K."/>
            <person name="Kawai Y."/>
            <person name="Isono Y."/>
            <person name="Nakamura Y."/>
            <person name="Nagahari K."/>
            <person name="Murakami K."/>
            <person name="Yasuda T."/>
            <person name="Iwayanagi T."/>
            <person name="Wagatsuma M."/>
            <person name="Shiratori A."/>
            <person name="Sudo H."/>
            <person name="Hosoiri T."/>
            <person name="Kaku Y."/>
            <person name="Kodaira H."/>
            <person name="Kondo H."/>
            <person name="Sugawara M."/>
            <person name="Takahashi M."/>
            <person name="Kanda K."/>
            <person name="Yokoi T."/>
            <person name="Furuya T."/>
            <person name="Kikkawa E."/>
            <person name="Omura Y."/>
            <person name="Abe K."/>
            <person name="Kamihara K."/>
            <person name="Katsuta N."/>
            <person name="Sato K."/>
            <person name="Tanikawa M."/>
            <person name="Yamazaki M."/>
            <person name="Ninomiya K."/>
            <person name="Ishibashi T."/>
            <person name="Yamashita H."/>
            <person name="Murakawa K."/>
            <person name="Fujimori K."/>
            <person name="Tanai H."/>
            <person name="Kimata M."/>
            <person name="Watanabe M."/>
            <person name="Hiraoka S."/>
            <person name="Chiba Y."/>
            <person name="Ishida S."/>
            <person name="Ono Y."/>
            <person name="Takiguchi S."/>
            <person name="Watanabe S."/>
            <person name="Yosida M."/>
            <person name="Hotuta T."/>
            <person name="Kusano J."/>
            <person name="Kanehori K."/>
            <person name="Takahashi-Fujii A."/>
            <person name="Hara H."/>
            <person name="Tanase T.-O."/>
            <person name="Nomura Y."/>
            <person name="Togiya S."/>
            <person name="Komai F."/>
            <person name="Hara R."/>
            <person name="Takeuchi K."/>
            <person name="Arita M."/>
            <person name="Imose N."/>
            <person name="Musashino K."/>
            <person name="Yuuki H."/>
            <person name="Oshima A."/>
            <person name="Sasaki N."/>
            <person name="Aotsuka S."/>
            <person name="Yoshikawa Y."/>
            <person name="Matsunawa H."/>
            <person name="Ichihara T."/>
            <person name="Shiohata N."/>
            <person name="Sano S."/>
            <person name="Moriya S."/>
            <person name="Momiyama H."/>
            <person name="Satoh N."/>
            <person name="Takami S."/>
            <person name="Terashima Y."/>
            <person name="Suzuki O."/>
            <person name="Nakagawa S."/>
            <person name="Senoh A."/>
            <person name="Mizoguchi H."/>
            <person name="Goto Y."/>
            <person name="Shimizu F."/>
            <person name="Wakebe H."/>
            <person name="Hishigaki H."/>
            <person name="Watanabe T."/>
            <person name="Sugiyama A."/>
            <person name="Takemoto M."/>
            <person name="Kawakami B."/>
            <person name="Yamazaki M."/>
            <person name="Watanabe K."/>
            <person name="Kumagai A."/>
            <person name="Itakura S."/>
            <person name="Fukuzumi Y."/>
            <person name="Fujimori Y."/>
            <person name="Komiyama M."/>
            <person name="Tashiro H."/>
            <person name="Tanigami A."/>
            <person name="Fujiwara T."/>
            <person name="Ono T."/>
            <person name="Yamada K."/>
            <person name="Fujii Y."/>
            <person name="Ozaki K."/>
            <person name="Hirao M."/>
            <person name="Ohmori Y."/>
            <person name="Kawabata A."/>
            <person name="Hikiji T."/>
            <person name="Kobatake N."/>
            <person name="Inagaki H."/>
            <person name="Ikema Y."/>
            <person name="Okamoto S."/>
            <person name="Okitani R."/>
            <person name="Kawakami T."/>
            <person name="Noguchi S."/>
            <person name="Itoh T."/>
            <person name="Shigeta K."/>
            <person name="Senba T."/>
            <person name="Matsumura K."/>
            <person name="Nakajima Y."/>
            <person name="Mizuno T."/>
            <person name="Morinaga M."/>
            <person name="Sasaki M."/>
            <person name="Togashi T."/>
            <person name="Oyama M."/>
            <person name="Hata H."/>
            <person name="Watanabe M."/>
            <person name="Komatsu T."/>
            <person name="Mizushima-Sugano J."/>
            <person name="Satoh T."/>
            <person name="Shirai Y."/>
            <person name="Takahashi Y."/>
            <person name="Nakagawa K."/>
            <person name="Okumura K."/>
            <person name="Nagase T."/>
            <person name="Nomura N."/>
            <person name="Kikuchi H."/>
            <person name="Masuho Y."/>
            <person name="Yamashita R."/>
            <person name="Nakai K."/>
            <person name="Yada T."/>
            <person name="Nakamura Y."/>
            <person name="Ohara O."/>
            <person name="Isogai T."/>
            <person name="Sugano S."/>
        </authorList>
    </citation>
    <scope>NUCLEOTIDE SEQUENCE [LARGE SCALE MRNA] (ISOFORMS 1 AND 2)</scope>
    <source>
        <tissue>Hippocampus</tissue>
    </source>
</reference>
<reference key="4">
    <citation type="journal article" date="2006" name="Nature">
        <title>DNA sequence of human chromosome 17 and analysis of rearrangement in the human lineage.</title>
        <authorList>
            <person name="Zody M.C."/>
            <person name="Garber M."/>
            <person name="Adams D.J."/>
            <person name="Sharpe T."/>
            <person name="Harrow J."/>
            <person name="Lupski J.R."/>
            <person name="Nicholson C."/>
            <person name="Searle S.M."/>
            <person name="Wilming L."/>
            <person name="Young S.K."/>
            <person name="Abouelleil A."/>
            <person name="Allen N.R."/>
            <person name="Bi W."/>
            <person name="Bloom T."/>
            <person name="Borowsky M.L."/>
            <person name="Bugalter B.E."/>
            <person name="Butler J."/>
            <person name="Chang J.L."/>
            <person name="Chen C.-K."/>
            <person name="Cook A."/>
            <person name="Corum B."/>
            <person name="Cuomo C.A."/>
            <person name="de Jong P.J."/>
            <person name="DeCaprio D."/>
            <person name="Dewar K."/>
            <person name="FitzGerald M."/>
            <person name="Gilbert J."/>
            <person name="Gibson R."/>
            <person name="Gnerre S."/>
            <person name="Goldstein S."/>
            <person name="Grafham D.V."/>
            <person name="Grocock R."/>
            <person name="Hafez N."/>
            <person name="Hagopian D.S."/>
            <person name="Hart E."/>
            <person name="Norman C.H."/>
            <person name="Humphray S."/>
            <person name="Jaffe D.B."/>
            <person name="Jones M."/>
            <person name="Kamal M."/>
            <person name="Khodiyar V.K."/>
            <person name="LaButti K."/>
            <person name="Laird G."/>
            <person name="Lehoczky J."/>
            <person name="Liu X."/>
            <person name="Lokyitsang T."/>
            <person name="Loveland J."/>
            <person name="Lui A."/>
            <person name="Macdonald P."/>
            <person name="Major J.E."/>
            <person name="Matthews L."/>
            <person name="Mauceli E."/>
            <person name="McCarroll S.A."/>
            <person name="Mihalev A.H."/>
            <person name="Mudge J."/>
            <person name="Nguyen C."/>
            <person name="Nicol R."/>
            <person name="O'Leary S.B."/>
            <person name="Osoegawa K."/>
            <person name="Schwartz D.C."/>
            <person name="Shaw-Smith C."/>
            <person name="Stankiewicz P."/>
            <person name="Steward C."/>
            <person name="Swarbreck D."/>
            <person name="Venkataraman V."/>
            <person name="Whittaker C.A."/>
            <person name="Yang X."/>
            <person name="Zimmer A.R."/>
            <person name="Bradley A."/>
            <person name="Hubbard T."/>
            <person name="Birren B.W."/>
            <person name="Rogers J."/>
            <person name="Lander E.S."/>
            <person name="Nusbaum C."/>
        </authorList>
    </citation>
    <scope>NUCLEOTIDE SEQUENCE [LARGE SCALE GENOMIC DNA]</scope>
</reference>
<reference key="5">
    <citation type="submission" date="2005-09" db="EMBL/GenBank/DDBJ databases">
        <authorList>
            <person name="Mural R.J."/>
            <person name="Istrail S."/>
            <person name="Sutton G.G."/>
            <person name="Florea L."/>
            <person name="Halpern A.L."/>
            <person name="Mobarry C.M."/>
            <person name="Lippert R."/>
            <person name="Walenz B."/>
            <person name="Shatkay H."/>
            <person name="Dew I."/>
            <person name="Miller J.R."/>
            <person name="Flanigan M.J."/>
            <person name="Edwards N.J."/>
            <person name="Bolanos R."/>
            <person name="Fasulo D."/>
            <person name="Halldorsson B.V."/>
            <person name="Hannenhalli S."/>
            <person name="Turner R."/>
            <person name="Yooseph S."/>
            <person name="Lu F."/>
            <person name="Nusskern D.R."/>
            <person name="Shue B.C."/>
            <person name="Zheng X.H."/>
            <person name="Zhong F."/>
            <person name="Delcher A.L."/>
            <person name="Huson D.H."/>
            <person name="Kravitz S.A."/>
            <person name="Mouchard L."/>
            <person name="Reinert K."/>
            <person name="Remington K.A."/>
            <person name="Clark A.G."/>
            <person name="Waterman M.S."/>
            <person name="Eichler E.E."/>
            <person name="Adams M.D."/>
            <person name="Hunkapiller M.W."/>
            <person name="Myers E.W."/>
            <person name="Venter J.C."/>
        </authorList>
    </citation>
    <scope>NUCLEOTIDE SEQUENCE [LARGE SCALE GENOMIC DNA]</scope>
</reference>
<reference key="6">
    <citation type="journal article" date="2004" name="Genome Res.">
        <title>The status, quality, and expansion of the NIH full-length cDNA project: the Mammalian Gene Collection (MGC).</title>
        <authorList>
            <consortium name="The MGC Project Team"/>
        </authorList>
    </citation>
    <scope>NUCLEOTIDE SEQUENCE [LARGE SCALE MRNA] (ISOFORM 1)</scope>
    <source>
        <tissue>Lung</tissue>
    </source>
</reference>
<reference key="7">
    <citation type="journal article" date="2003" name="Nat. Biotechnol.">
        <title>Exploring proteomes and analyzing protein processing by mass spectrometric identification of sorted N-terminal peptides.</title>
        <authorList>
            <person name="Gevaert K."/>
            <person name="Goethals M."/>
            <person name="Martens L."/>
            <person name="Van Damme J."/>
            <person name="Staes A."/>
            <person name="Thomas G.R."/>
            <person name="Vandekerckhove J."/>
        </authorList>
    </citation>
    <scope>PROTEIN SEQUENCE OF 2-13 (ISOFORM 1)</scope>
    <source>
        <tissue>Platelet</tissue>
    </source>
</reference>
<reference key="8">
    <citation type="submission" date="2005-10" db="UniProtKB">
        <authorList>
            <person name="Bienvenut W.V."/>
            <person name="Quadroni M."/>
        </authorList>
    </citation>
    <scope>PROTEIN SEQUENCE OF 2-13; 31-37; 244-251 AND 313-336 (ISOFORM 1)</scope>
    <scope>CLEAVAGE OF INITIATOR METHIONINE</scope>
    <scope>ACETYLATION AT ALA-2</scope>
    <scope>IDENTIFICATION BY MASS SPECTROMETRY</scope>
    <source>
        <tissue>Cervix carcinoma</tissue>
        <tissue>Platelet</tissue>
    </source>
</reference>
<reference key="9">
    <citation type="journal article" date="2001" name="EMBO J.">
        <title>COP9 signalosome-specific phosphorylation targets p53 to degradation by the ubiquitin system.</title>
        <authorList>
            <person name="Bech-Otschir D."/>
            <person name="Kraft R."/>
            <person name="Huang X."/>
            <person name="Henklein P."/>
            <person name="Kapelari B."/>
            <person name="Pollmann C."/>
            <person name="Dubiel W."/>
        </authorList>
    </citation>
    <scope>FUNCTION</scope>
</reference>
<reference key="10">
    <citation type="journal article" date="2001" name="FEBS Lett.">
        <title>CSN3 interacts with IKKgamma and inhibits TNF- but not IL-1-induced NF-kappaB activation.</title>
        <authorList>
            <person name="Hong X."/>
            <person name="Xu L.-G."/>
            <person name="Li X."/>
            <person name="Zhai Z."/>
            <person name="Shu H.-B."/>
        </authorList>
    </citation>
    <scope>INTERACTION WITH IKBKG</scope>
</reference>
<reference key="11">
    <citation type="journal article" date="2001" name="Science">
        <title>Promotion of NEDD-CUL1 conjugate cleavage by COP9 signalosome.</title>
        <authorList>
            <person name="Lyapina S."/>
            <person name="Cope G."/>
            <person name="Shevchenko A."/>
            <person name="Serino G."/>
            <person name="Tsuge T."/>
            <person name="Zhou C."/>
            <person name="Wolf D.A."/>
            <person name="Wei N."/>
            <person name="Shevchenko A."/>
            <person name="Deshaies R.J."/>
        </authorList>
    </citation>
    <scope>FUNCTION</scope>
    <scope>COMPOSITION OF THE CSN COMPLEX</scope>
</reference>
<reference key="12">
    <citation type="journal article" date="2002" name="FEBS Lett.">
        <title>Association of the mammalian proto-oncoprotein Int-6 with the three protein complexes eIF3, COP9 signalosome and 26S proteasome.</title>
        <authorList>
            <person name="Hoareau Alves K."/>
            <person name="Bochard V."/>
            <person name="Rety S."/>
            <person name="Jalinot P."/>
        </authorList>
    </citation>
    <scope>INTERACTION WITH EIF3S6</scope>
</reference>
<reference key="13">
    <citation type="journal article" date="2003" name="Cell">
        <title>The ubiquitin ligase activity in the DDB2 and CSA complexes is differentially regulated by the COP9 signalosome in response to DNA damage.</title>
        <authorList>
            <person name="Groisman R."/>
            <person name="Polanowska J."/>
            <person name="Kuraoka I."/>
            <person name="Sawada J."/>
            <person name="Saijo M."/>
            <person name="Drapkin R."/>
            <person name="Kisselev A.F."/>
            <person name="Tanaka K."/>
            <person name="Nakatani Y."/>
        </authorList>
    </citation>
    <scope>FUNCTION</scope>
</reference>
<reference key="14">
    <citation type="journal article" date="2003" name="EMBO J.">
        <title>Protein kinase CK2 and protein kinase D are associated with the COP9 signalosome.</title>
        <authorList>
            <person name="Uhle S."/>
            <person name="Medalia O."/>
            <person name="Waldron R."/>
            <person name="Dumdey R."/>
            <person name="Henklein P."/>
            <person name="Bech-Otschir D."/>
            <person name="Huang X."/>
            <person name="Berse M."/>
            <person name="Sperling J."/>
            <person name="Schade R."/>
            <person name="Dubiel W."/>
        </authorList>
    </citation>
    <scope>FUNCTION</scope>
    <scope>INTERACTION WITH CK2 AND PKD</scope>
</reference>
<reference key="15">
    <citation type="journal article" date="2003" name="Oncogene">
        <title>Amplification and overexpression of COPS3 in osteosarcomas potentially target TP53 for proteasome-mediated degradation.</title>
        <authorList>
            <person name="Henriksen J."/>
            <person name="Aagesen T.H."/>
            <person name="Maelandsmo G.M."/>
            <person name="Lothe R.A."/>
            <person name="Myklebost O."/>
            <person name="Forus A."/>
        </authorList>
    </citation>
    <scope>OVEREXPRESSION IN OSTEOSARCOMA</scope>
</reference>
<reference key="16">
    <citation type="journal article" date="2004" name="Cancer Genet. Cytogenet.">
        <title>Amplification and overexpression of genes in 17p11.2 approximately p12 in osteosarcoma.</title>
        <authorList>
            <person name="Van Dartel M."/>
            <person name="Hulsebos T.J.M."/>
        </authorList>
    </citation>
    <scope>OVEREXPRESSION IN OSTEOSARCOMA</scope>
</reference>
<reference key="17">
    <citation type="journal article" date="2007" name="Science">
        <title>ATM and ATR substrate analysis reveals extensive protein networks responsive to DNA damage.</title>
        <authorList>
            <person name="Matsuoka S."/>
            <person name="Ballif B.A."/>
            <person name="Smogorzewska A."/>
            <person name="McDonald E.R. III"/>
            <person name="Hurov K.E."/>
            <person name="Luo J."/>
            <person name="Bakalarski C.E."/>
            <person name="Zhao Z."/>
            <person name="Solimini N."/>
            <person name="Lerenthal Y."/>
            <person name="Shiloh Y."/>
            <person name="Gygi S.P."/>
            <person name="Elledge S.J."/>
        </authorList>
    </citation>
    <scope>IDENTIFICATION BY MASS SPECTROMETRY [LARGE SCALE ANALYSIS]</scope>
    <source>
        <tissue>Embryonic kidney</tissue>
    </source>
</reference>
<reference key="18">
    <citation type="journal article" date="2008" name="J. Proteome Res.">
        <title>Characterization of the human COP9 signalosome complex using affinity purification and mass spectrometry.</title>
        <authorList>
            <person name="Fang L."/>
            <person name="Wang X."/>
            <person name="Yamoah K."/>
            <person name="Chen P.L."/>
            <person name="Pan Z.Q."/>
            <person name="Huang L."/>
        </authorList>
    </citation>
    <scope>IDENTIFICATION IN THE CSN COMPLEX</scope>
    <scope>CLEAVAGE OF INITIATOR METHIONINE</scope>
    <scope>ACETYLATION AT ALA-2</scope>
    <scope>PHOSPHORYLATION AT SER-423</scope>
</reference>
<reference key="19">
    <citation type="journal article" date="2008" name="Proc. Natl. Acad. Sci. U.S.A.">
        <title>A quantitative atlas of mitotic phosphorylation.</title>
        <authorList>
            <person name="Dephoure N."/>
            <person name="Zhou C."/>
            <person name="Villen J."/>
            <person name="Beausoleil S.A."/>
            <person name="Bakalarski C.E."/>
            <person name="Elledge S.J."/>
            <person name="Gygi S.P."/>
        </authorList>
    </citation>
    <scope>PHOSPHORYLATION [LARGE SCALE ANALYSIS] AT SER-410 AND SER-423</scope>
    <scope>IDENTIFICATION BY MASS SPECTROMETRY [LARGE SCALE ANALYSIS]</scope>
    <source>
        <tissue>Cervix carcinoma</tissue>
    </source>
</reference>
<reference key="20">
    <citation type="journal article" date="2009" name="Anal. Chem.">
        <title>Lys-N and trypsin cover complementary parts of the phosphoproteome in a refined SCX-based approach.</title>
        <authorList>
            <person name="Gauci S."/>
            <person name="Helbig A.O."/>
            <person name="Slijper M."/>
            <person name="Krijgsveld J."/>
            <person name="Heck A.J."/>
            <person name="Mohammed S."/>
        </authorList>
    </citation>
    <scope>ACETYLATION [LARGE SCALE ANALYSIS] AT ALA-2</scope>
    <scope>CLEAVAGE OF INITIATOR METHIONINE [LARGE SCALE ANALYSIS]</scope>
    <scope>IDENTIFICATION BY MASS SPECTROMETRY [LARGE SCALE ANALYSIS]</scope>
</reference>
<reference key="21">
    <citation type="journal article" date="2010" name="Sci. Signal.">
        <title>Quantitative phosphoproteomics reveals widespread full phosphorylation site occupancy during mitosis.</title>
        <authorList>
            <person name="Olsen J.V."/>
            <person name="Vermeulen M."/>
            <person name="Santamaria A."/>
            <person name="Kumar C."/>
            <person name="Miller M.L."/>
            <person name="Jensen L.J."/>
            <person name="Gnad F."/>
            <person name="Cox J."/>
            <person name="Jensen T.S."/>
            <person name="Nigg E.A."/>
            <person name="Brunak S."/>
            <person name="Mann M."/>
        </authorList>
    </citation>
    <scope>PHOSPHORYLATION [LARGE SCALE ANALYSIS] AT SER-423</scope>
    <scope>IDENTIFICATION BY MASS SPECTROMETRY [LARGE SCALE ANALYSIS]</scope>
    <source>
        <tissue>Cervix carcinoma</tissue>
    </source>
</reference>
<reference key="22">
    <citation type="journal article" date="2011" name="BMC Syst. Biol.">
        <title>Initial characterization of the human central proteome.</title>
        <authorList>
            <person name="Burkard T.R."/>
            <person name="Planyavsky M."/>
            <person name="Kaupe I."/>
            <person name="Breitwieser F.P."/>
            <person name="Buerckstuemmer T."/>
            <person name="Bennett K.L."/>
            <person name="Superti-Furga G."/>
            <person name="Colinge J."/>
        </authorList>
    </citation>
    <scope>IDENTIFICATION BY MASS SPECTROMETRY [LARGE SCALE ANALYSIS]</scope>
</reference>
<reference key="23">
    <citation type="journal article" date="2011" name="Sci. Signal.">
        <title>System-wide temporal characterization of the proteome and phosphoproteome of human embryonic stem cell differentiation.</title>
        <authorList>
            <person name="Rigbolt K.T."/>
            <person name="Prokhorova T.A."/>
            <person name="Akimov V."/>
            <person name="Henningsen J."/>
            <person name="Johansen P.T."/>
            <person name="Kratchmarova I."/>
            <person name="Kassem M."/>
            <person name="Mann M."/>
            <person name="Olsen J.V."/>
            <person name="Blagoev B."/>
        </authorList>
    </citation>
    <scope>PHOSPHORYLATION [LARGE SCALE ANALYSIS] AT SER-423</scope>
    <scope>IDENTIFICATION BY MASS SPECTROMETRY [LARGE SCALE ANALYSIS]</scope>
</reference>
<reference key="24">
    <citation type="journal article" date="2012" name="Mol. Cell. Proteomics">
        <title>Comparative large-scale characterisation of plant vs. mammal proteins reveals similar and idiosyncratic N-alpha acetylation features.</title>
        <authorList>
            <person name="Bienvenut W.V."/>
            <person name="Sumpton D."/>
            <person name="Martinez A."/>
            <person name="Lilla S."/>
            <person name="Espagne C."/>
            <person name="Meinnel T."/>
            <person name="Giglione C."/>
        </authorList>
    </citation>
    <scope>ACETYLATION [LARGE SCALE ANALYSIS] AT ALA-2</scope>
    <scope>CLEAVAGE OF INITIATOR METHIONINE [LARGE SCALE ANALYSIS]</scope>
    <scope>IDENTIFICATION BY MASS SPECTROMETRY [LARGE SCALE ANALYSIS]</scope>
</reference>
<reference key="25">
    <citation type="journal article" date="2012" name="Proc. Natl. Acad. Sci. U.S.A.">
        <title>N-terminal acetylome analyses and functional insights of the N-terminal acetyltransferase NatB.</title>
        <authorList>
            <person name="Van Damme P."/>
            <person name="Lasa M."/>
            <person name="Polevoda B."/>
            <person name="Gazquez C."/>
            <person name="Elosegui-Artola A."/>
            <person name="Kim D.S."/>
            <person name="De Juan-Pardo E."/>
            <person name="Demeyer K."/>
            <person name="Hole K."/>
            <person name="Larrea E."/>
            <person name="Timmerman E."/>
            <person name="Prieto J."/>
            <person name="Arnesen T."/>
            <person name="Sherman F."/>
            <person name="Gevaert K."/>
            <person name="Aldabe R."/>
        </authorList>
    </citation>
    <scope>ACETYLATION [LARGE SCALE ANALYSIS] AT ALA-2</scope>
    <scope>CLEAVAGE OF INITIATOR METHIONINE [LARGE SCALE ANALYSIS]</scope>
    <scope>IDENTIFICATION BY MASS SPECTROMETRY [LARGE SCALE ANALYSIS]</scope>
</reference>
<reference key="26">
    <citation type="journal article" date="2013" name="J. Proteome Res.">
        <title>Toward a comprehensive characterization of a human cancer cell phosphoproteome.</title>
        <authorList>
            <person name="Zhou H."/>
            <person name="Di Palma S."/>
            <person name="Preisinger C."/>
            <person name="Peng M."/>
            <person name="Polat A.N."/>
            <person name="Heck A.J."/>
            <person name="Mohammed S."/>
        </authorList>
    </citation>
    <scope>PHOSPHORYLATION [LARGE SCALE ANALYSIS] AT SER-410</scope>
    <scope>IDENTIFICATION BY MASS SPECTROMETRY [LARGE SCALE ANALYSIS]</scope>
    <source>
        <tissue>Cervix carcinoma</tissue>
        <tissue>Erythroleukemia</tissue>
    </source>
</reference>
<reference key="27">
    <citation type="journal article" date="2014" name="J. Proteomics">
        <title>An enzyme assisted RP-RPLC approach for in-depth analysis of human liver phosphoproteome.</title>
        <authorList>
            <person name="Bian Y."/>
            <person name="Song C."/>
            <person name="Cheng K."/>
            <person name="Dong M."/>
            <person name="Wang F."/>
            <person name="Huang J."/>
            <person name="Sun D."/>
            <person name="Wang L."/>
            <person name="Ye M."/>
            <person name="Zou H."/>
        </authorList>
    </citation>
    <scope>IDENTIFICATION BY MASS SPECTROMETRY [LARGE SCALE ANALYSIS]</scope>
    <source>
        <tissue>Liver</tissue>
    </source>
</reference>
<reference key="28">
    <citation type="journal article" date="2015" name="Cell Rep.">
        <title>CSNAP is a stoichiometric subunit of the COP9 signalosome.</title>
        <authorList>
            <person name="Rozen S."/>
            <person name="Fuezesi-Levi M.G."/>
            <person name="Ben-Nissan G."/>
            <person name="Mizrachi L."/>
            <person name="Gabashvili A."/>
            <person name="Levin Y."/>
            <person name="Ben-Dor S."/>
            <person name="Eisenstein M."/>
            <person name="Sharon M."/>
        </authorList>
    </citation>
    <scope>COMPOSITION OF THE CSN COMPLEX</scope>
    <scope>INTERACTION WITH COPS9</scope>
</reference>
<reference key="29">
    <citation type="journal article" date="2015" name="PLoS ONE">
        <title>Identification of Novel Proteins Co-Purifying with Cockayne Syndrome Group B (CSB) Reveals Potential Roles for CSB in RNA Metabolism and Chromatin Dynamics.</title>
        <authorList>
            <person name="Nicolai S."/>
            <person name="Filippi S."/>
            <person name="Caputo M."/>
            <person name="Cipak L."/>
            <person name="Gregan J."/>
            <person name="Ammerer G."/>
            <person name="Frontini M."/>
            <person name="Willems D."/>
            <person name="Prantera G."/>
            <person name="Balajee A.S."/>
            <person name="Proietti-De-Santis L."/>
        </authorList>
    </citation>
    <scope>INTERACTION WITH ERCC6</scope>
</reference>
<organism>
    <name type="scientific">Homo sapiens</name>
    <name type="common">Human</name>
    <dbReference type="NCBI Taxonomy" id="9606"/>
    <lineage>
        <taxon>Eukaryota</taxon>
        <taxon>Metazoa</taxon>
        <taxon>Chordata</taxon>
        <taxon>Craniata</taxon>
        <taxon>Vertebrata</taxon>
        <taxon>Euteleostomi</taxon>
        <taxon>Mammalia</taxon>
        <taxon>Eutheria</taxon>
        <taxon>Euarchontoglires</taxon>
        <taxon>Primates</taxon>
        <taxon>Haplorrhini</taxon>
        <taxon>Catarrhini</taxon>
        <taxon>Hominidae</taxon>
        <taxon>Homo</taxon>
    </lineage>
</organism>
<dbReference type="EMBL" id="AF031647">
    <property type="protein sequence ID" value="AAC14197.1"/>
    <property type="status" value="ALT_FRAME"/>
    <property type="molecule type" value="mRNA"/>
</dbReference>
<dbReference type="EMBL" id="AF098109">
    <property type="protein sequence ID" value="AAD41247.1"/>
    <property type="molecule type" value="mRNA"/>
</dbReference>
<dbReference type="EMBL" id="AK312476">
    <property type="protein sequence ID" value="BAG35380.1"/>
    <property type="molecule type" value="mRNA"/>
</dbReference>
<dbReference type="EMBL" id="AK302304">
    <property type="protein sequence ID" value="BAG63643.1"/>
    <property type="molecule type" value="mRNA"/>
</dbReference>
<dbReference type="EMBL" id="AK316400">
    <property type="protein sequence ID" value="BAH14771.1"/>
    <property type="molecule type" value="mRNA"/>
</dbReference>
<dbReference type="EMBL" id="AC055811">
    <property type="status" value="NOT_ANNOTATED_CDS"/>
    <property type="molecule type" value="Genomic_DNA"/>
</dbReference>
<dbReference type="EMBL" id="CH471196">
    <property type="protein sequence ID" value="EAW55712.1"/>
    <property type="molecule type" value="Genomic_DNA"/>
</dbReference>
<dbReference type="EMBL" id="BC001891">
    <property type="protein sequence ID" value="AAH01891.1"/>
    <property type="molecule type" value="mRNA"/>
</dbReference>
<dbReference type="CCDS" id="CCDS11183.1">
    <molecule id="Q9UNS2-1"/>
</dbReference>
<dbReference type="CCDS" id="CCDS56022.1">
    <molecule id="Q9UNS2-2"/>
</dbReference>
<dbReference type="RefSeq" id="NP_001186054.1">
    <molecule id="Q9UNS2-2"/>
    <property type="nucleotide sequence ID" value="NM_001199125.1"/>
</dbReference>
<dbReference type="RefSeq" id="NP_001303283.1">
    <property type="nucleotide sequence ID" value="NM_001316354.1"/>
</dbReference>
<dbReference type="RefSeq" id="NP_001303284.1">
    <property type="nucleotide sequence ID" value="NM_001316355.1"/>
</dbReference>
<dbReference type="RefSeq" id="NP_001303285.1">
    <property type="nucleotide sequence ID" value="NM_001316356.1"/>
</dbReference>
<dbReference type="RefSeq" id="NP_001303286.1">
    <property type="nucleotide sequence ID" value="NM_001316357.1"/>
</dbReference>
<dbReference type="RefSeq" id="NP_001303287.1">
    <property type="nucleotide sequence ID" value="NM_001316358.1"/>
</dbReference>
<dbReference type="RefSeq" id="NP_003644.2">
    <molecule id="Q9UNS2-1"/>
    <property type="nucleotide sequence ID" value="NM_003653.3"/>
</dbReference>
<dbReference type="RefSeq" id="XP_005256894.1">
    <property type="nucleotide sequence ID" value="XM_005256837.4"/>
</dbReference>
<dbReference type="PDB" id="4D10">
    <property type="method" value="X-ray"/>
    <property type="resolution" value="3.80 A"/>
    <property type="chains" value="C/K=1-423"/>
</dbReference>
<dbReference type="PDB" id="4D18">
    <property type="method" value="X-ray"/>
    <property type="resolution" value="4.08 A"/>
    <property type="chains" value="C/K=1-423"/>
</dbReference>
<dbReference type="PDB" id="4WSN">
    <property type="method" value="X-ray"/>
    <property type="resolution" value="5.50 A"/>
    <property type="chains" value="C/K/S/a/i/q=1-423"/>
</dbReference>
<dbReference type="PDB" id="6R6H">
    <property type="method" value="EM"/>
    <property type="resolution" value="8.40 A"/>
    <property type="chains" value="C=1-383"/>
</dbReference>
<dbReference type="PDB" id="6R7F">
    <property type="method" value="EM"/>
    <property type="resolution" value="8.20 A"/>
    <property type="chains" value="C=1-403"/>
</dbReference>
<dbReference type="PDB" id="6R7H">
    <property type="method" value="EM"/>
    <property type="resolution" value="8.80 A"/>
    <property type="chains" value="C=1-403"/>
</dbReference>
<dbReference type="PDB" id="6R7I">
    <property type="method" value="EM"/>
    <property type="resolution" value="5.90 A"/>
    <property type="chains" value="C=3-403"/>
</dbReference>
<dbReference type="PDB" id="6R7N">
    <property type="method" value="EM"/>
    <property type="resolution" value="6.50 A"/>
    <property type="chains" value="C=3-403"/>
</dbReference>
<dbReference type="PDB" id="8H38">
    <property type="method" value="EM"/>
    <property type="resolution" value="4.25 A"/>
    <property type="chains" value="C=1-423"/>
</dbReference>
<dbReference type="PDB" id="8H3A">
    <property type="method" value="EM"/>
    <property type="resolution" value="7.51 A"/>
    <property type="chains" value="C=1-423"/>
</dbReference>
<dbReference type="PDB" id="8H3F">
    <property type="method" value="EM"/>
    <property type="resolution" value="6.73 A"/>
    <property type="chains" value="C=1-423"/>
</dbReference>
<dbReference type="PDBsum" id="4D10"/>
<dbReference type="PDBsum" id="4D18"/>
<dbReference type="PDBsum" id="4WSN"/>
<dbReference type="PDBsum" id="6R6H"/>
<dbReference type="PDBsum" id="6R7F"/>
<dbReference type="PDBsum" id="6R7H"/>
<dbReference type="PDBsum" id="6R7I"/>
<dbReference type="PDBsum" id="6R7N"/>
<dbReference type="PDBsum" id="8H38"/>
<dbReference type="PDBsum" id="8H3A"/>
<dbReference type="PDBsum" id="8H3F"/>
<dbReference type="EMDB" id="EMD-3313"/>
<dbReference type="EMDB" id="EMD-3314"/>
<dbReference type="EMDB" id="EMD-3315"/>
<dbReference type="EMDB" id="EMD-3316"/>
<dbReference type="EMDB" id="EMD-3317"/>
<dbReference type="EMDB" id="EMD-3401"/>
<dbReference type="EMDB" id="EMD-34455"/>
<dbReference type="EMDB" id="EMD-34462"/>
<dbReference type="EMDB" id="EMD-34467"/>
<dbReference type="EMDB" id="EMD-4736"/>
<dbReference type="EMDB" id="EMD-4739"/>
<dbReference type="EMDB" id="EMD-4741"/>
<dbReference type="EMDB" id="EMD-4742"/>
<dbReference type="EMDB" id="EMD-4744"/>
<dbReference type="SMR" id="Q9UNS2"/>
<dbReference type="BioGRID" id="114103">
    <property type="interactions" value="258"/>
</dbReference>
<dbReference type="ComplexPortal" id="CPX-1870">
    <property type="entry name" value="COP9 signalosome variant 1"/>
</dbReference>
<dbReference type="ComplexPortal" id="CPX-1871">
    <property type="entry name" value="COP9 signalosome variant 2"/>
</dbReference>
<dbReference type="CORUM" id="Q9UNS2"/>
<dbReference type="DIP" id="DIP-32478N"/>
<dbReference type="FunCoup" id="Q9UNS2">
    <property type="interactions" value="4229"/>
</dbReference>
<dbReference type="IntAct" id="Q9UNS2">
    <property type="interactions" value="134"/>
</dbReference>
<dbReference type="MINT" id="Q9UNS2"/>
<dbReference type="STRING" id="9606.ENSP00000268717"/>
<dbReference type="GlyGen" id="Q9UNS2">
    <property type="glycosylation" value="1 site, 1 O-linked glycan (1 site)"/>
</dbReference>
<dbReference type="iPTMnet" id="Q9UNS2"/>
<dbReference type="MetOSite" id="Q9UNS2"/>
<dbReference type="PhosphoSitePlus" id="Q9UNS2"/>
<dbReference type="SwissPalm" id="Q9UNS2"/>
<dbReference type="BioMuta" id="COPS3"/>
<dbReference type="DMDM" id="55976621"/>
<dbReference type="jPOST" id="Q9UNS2"/>
<dbReference type="MassIVE" id="Q9UNS2"/>
<dbReference type="PaxDb" id="9606-ENSP00000268717"/>
<dbReference type="PeptideAtlas" id="Q9UNS2"/>
<dbReference type="ProteomicsDB" id="5506"/>
<dbReference type="ProteomicsDB" id="85328">
    <molecule id="Q9UNS2-1"/>
</dbReference>
<dbReference type="Pumba" id="Q9UNS2"/>
<dbReference type="Antibodypedia" id="13330">
    <property type="antibodies" value="383 antibodies from 38 providers"/>
</dbReference>
<dbReference type="DNASU" id="8533"/>
<dbReference type="Ensembl" id="ENST00000268717.10">
    <molecule id="Q9UNS2-1"/>
    <property type="protein sequence ID" value="ENSP00000268717.5"/>
    <property type="gene ID" value="ENSG00000141030.13"/>
</dbReference>
<dbReference type="Ensembl" id="ENST00000539941.6">
    <molecule id="Q9UNS2-2"/>
    <property type="protein sequence ID" value="ENSP00000437606.2"/>
    <property type="gene ID" value="ENSG00000141030.13"/>
</dbReference>
<dbReference type="GeneID" id="8533"/>
<dbReference type="KEGG" id="hsa:8533"/>
<dbReference type="MANE-Select" id="ENST00000268717.10">
    <property type="protein sequence ID" value="ENSP00000268717.5"/>
    <property type="RefSeq nucleotide sequence ID" value="NM_003653.4"/>
    <property type="RefSeq protein sequence ID" value="NP_003644.2"/>
</dbReference>
<dbReference type="UCSC" id="uc002grd.4">
    <molecule id="Q9UNS2-1"/>
    <property type="organism name" value="human"/>
</dbReference>
<dbReference type="AGR" id="HGNC:2239"/>
<dbReference type="CTD" id="8533"/>
<dbReference type="DisGeNET" id="8533"/>
<dbReference type="GeneCards" id="COPS3"/>
<dbReference type="HGNC" id="HGNC:2239">
    <property type="gene designation" value="COPS3"/>
</dbReference>
<dbReference type="HPA" id="ENSG00000141030">
    <property type="expression patterns" value="Low tissue specificity"/>
</dbReference>
<dbReference type="MIM" id="604665">
    <property type="type" value="gene"/>
</dbReference>
<dbReference type="neXtProt" id="NX_Q9UNS2"/>
<dbReference type="OpenTargets" id="ENSG00000141030"/>
<dbReference type="PharmGKB" id="PA26755"/>
<dbReference type="VEuPathDB" id="HostDB:ENSG00000141030"/>
<dbReference type="eggNOG" id="KOG2582">
    <property type="taxonomic scope" value="Eukaryota"/>
</dbReference>
<dbReference type="GeneTree" id="ENSGT00940000153653"/>
<dbReference type="HOGENOM" id="CLU_028825_0_1_1"/>
<dbReference type="InParanoid" id="Q9UNS2"/>
<dbReference type="OMA" id="NHYHDLV"/>
<dbReference type="OrthoDB" id="29061at2759"/>
<dbReference type="PAN-GO" id="Q9UNS2">
    <property type="GO annotations" value="2 GO annotations based on evolutionary models"/>
</dbReference>
<dbReference type="PhylomeDB" id="Q9UNS2"/>
<dbReference type="TreeFam" id="TF101146"/>
<dbReference type="PathwayCommons" id="Q9UNS2"/>
<dbReference type="Reactome" id="R-HSA-5696394">
    <property type="pathway name" value="DNA Damage Recognition in GG-NER"/>
</dbReference>
<dbReference type="Reactome" id="R-HSA-6781823">
    <property type="pathway name" value="Formation of TC-NER Pre-Incision Complex"/>
</dbReference>
<dbReference type="Reactome" id="R-HSA-8856825">
    <property type="pathway name" value="Cargo recognition for clathrin-mediated endocytosis"/>
</dbReference>
<dbReference type="Reactome" id="R-HSA-8951664">
    <property type="pathway name" value="Neddylation"/>
</dbReference>
<dbReference type="SignaLink" id="Q9UNS2"/>
<dbReference type="SIGNOR" id="Q9UNS2"/>
<dbReference type="BioGRID-ORCS" id="8533">
    <property type="hits" value="533 hits in 1178 CRISPR screens"/>
</dbReference>
<dbReference type="CD-CODE" id="8C2F96ED">
    <property type="entry name" value="Centrosome"/>
</dbReference>
<dbReference type="ChiTaRS" id="COPS3">
    <property type="organism name" value="human"/>
</dbReference>
<dbReference type="EvolutionaryTrace" id="Q9UNS2"/>
<dbReference type="GeneWiki" id="COP9_signalosome_complex_subunit_3"/>
<dbReference type="GenomeRNAi" id="8533"/>
<dbReference type="Pharos" id="Q9UNS2">
    <property type="development level" value="Tbio"/>
</dbReference>
<dbReference type="PRO" id="PR:Q9UNS2"/>
<dbReference type="Proteomes" id="UP000005640">
    <property type="component" value="Chromosome 17"/>
</dbReference>
<dbReference type="RNAct" id="Q9UNS2">
    <property type="molecule type" value="protein"/>
</dbReference>
<dbReference type="Bgee" id="ENSG00000141030">
    <property type="expression patterns" value="Expressed in gastrocnemius and 209 other cell types or tissues"/>
</dbReference>
<dbReference type="ExpressionAtlas" id="Q9UNS2">
    <property type="expression patterns" value="baseline and differential"/>
</dbReference>
<dbReference type="GO" id="GO:0008180">
    <property type="term" value="C:COP9 signalosome"/>
    <property type="evidence" value="ECO:0000314"/>
    <property type="project" value="UniProtKB"/>
</dbReference>
<dbReference type="GO" id="GO:0005737">
    <property type="term" value="C:cytoplasm"/>
    <property type="evidence" value="ECO:0000314"/>
    <property type="project" value="ComplexPortal"/>
</dbReference>
<dbReference type="GO" id="GO:0005829">
    <property type="term" value="C:cytosol"/>
    <property type="evidence" value="ECO:0000314"/>
    <property type="project" value="HPA"/>
</dbReference>
<dbReference type="GO" id="GO:0005654">
    <property type="term" value="C:nucleoplasm"/>
    <property type="evidence" value="ECO:0000314"/>
    <property type="project" value="HPA"/>
</dbReference>
<dbReference type="GO" id="GO:0005634">
    <property type="term" value="C:nucleus"/>
    <property type="evidence" value="ECO:0000314"/>
    <property type="project" value="ComplexPortal"/>
</dbReference>
<dbReference type="GO" id="GO:0048471">
    <property type="term" value="C:perinuclear region of cytoplasm"/>
    <property type="evidence" value="ECO:0000314"/>
    <property type="project" value="UniProtKB"/>
</dbReference>
<dbReference type="GO" id="GO:0001701">
    <property type="term" value="P:in utero embryonic development"/>
    <property type="evidence" value="ECO:0007669"/>
    <property type="project" value="Ensembl"/>
</dbReference>
<dbReference type="GO" id="GO:0000338">
    <property type="term" value="P:protein deneddylation"/>
    <property type="evidence" value="ECO:0000314"/>
    <property type="project" value="UniProtKB"/>
</dbReference>
<dbReference type="GO" id="GO:0045116">
    <property type="term" value="P:protein neddylation"/>
    <property type="evidence" value="ECO:0000303"/>
    <property type="project" value="ComplexPortal"/>
</dbReference>
<dbReference type="GO" id="GO:0043516">
    <property type="term" value="P:regulation of DNA damage response, signal transduction by p53 class mediator"/>
    <property type="evidence" value="ECO:0000315"/>
    <property type="project" value="UniProtKB"/>
</dbReference>
<dbReference type="GO" id="GO:2000434">
    <property type="term" value="P:regulation of protein neddylation"/>
    <property type="evidence" value="ECO:0000303"/>
    <property type="project" value="ComplexPortal"/>
</dbReference>
<dbReference type="GO" id="GO:0009416">
    <property type="term" value="P:response to light stimulus"/>
    <property type="evidence" value="ECO:0000304"/>
    <property type="project" value="ProtInc"/>
</dbReference>
<dbReference type="GO" id="GO:0007165">
    <property type="term" value="P:signal transduction"/>
    <property type="evidence" value="ECO:0000304"/>
    <property type="project" value="ProtInc"/>
</dbReference>
<dbReference type="GO" id="GO:0006511">
    <property type="term" value="P:ubiquitin-dependent protein catabolic process"/>
    <property type="evidence" value="ECO:0000318"/>
    <property type="project" value="GO_Central"/>
</dbReference>
<dbReference type="FunFam" id="1.10.10.10:FF:000354">
    <property type="entry name" value="COP9 signalosome complex subunit 3"/>
    <property type="match status" value="1"/>
</dbReference>
<dbReference type="FunFam" id="1.25.40.570:FF:000008">
    <property type="entry name" value="COP9 signalosome complex subunit 3"/>
    <property type="match status" value="1"/>
</dbReference>
<dbReference type="Gene3D" id="1.25.40.570">
    <property type="match status" value="1"/>
</dbReference>
<dbReference type="InterPro" id="IPR055089">
    <property type="entry name" value="COP9_N"/>
</dbReference>
<dbReference type="InterPro" id="IPR050756">
    <property type="entry name" value="CSN3"/>
</dbReference>
<dbReference type="InterPro" id="IPR048621">
    <property type="entry name" value="CSN3_C"/>
</dbReference>
<dbReference type="InterPro" id="IPR000717">
    <property type="entry name" value="PCI_dom"/>
</dbReference>
<dbReference type="InterPro" id="IPR036390">
    <property type="entry name" value="WH_DNA-bd_sf"/>
</dbReference>
<dbReference type="PANTHER" id="PTHR10758">
    <property type="entry name" value="26S PROTEASOME NON-ATPASE REGULATORY SUBUNIT 3/COP9 SIGNALOSOME COMPLEX SUBUNIT 3"/>
    <property type="match status" value="1"/>
</dbReference>
<dbReference type="PANTHER" id="PTHR10758:SF1">
    <property type="entry name" value="COP9 SIGNALOSOME COMPLEX SUBUNIT 3"/>
    <property type="match status" value="1"/>
</dbReference>
<dbReference type="Pfam" id="PF22788">
    <property type="entry name" value="COP9_hel_rpt"/>
    <property type="match status" value="1"/>
</dbReference>
<dbReference type="Pfam" id="PF21215">
    <property type="entry name" value="CSN3-like_C"/>
    <property type="match status" value="1"/>
</dbReference>
<dbReference type="Pfam" id="PF01399">
    <property type="entry name" value="PCI"/>
    <property type="match status" value="1"/>
</dbReference>
<dbReference type="SMART" id="SM00088">
    <property type="entry name" value="PINT"/>
    <property type="match status" value="1"/>
</dbReference>
<dbReference type="SUPFAM" id="SSF46785">
    <property type="entry name" value="Winged helix' DNA-binding domain"/>
    <property type="match status" value="1"/>
</dbReference>
<dbReference type="PROSITE" id="PS50250">
    <property type="entry name" value="PCI"/>
    <property type="match status" value="1"/>
</dbReference>
<proteinExistence type="evidence at protein level"/>
<protein>
    <recommendedName>
        <fullName>COP9 signalosome complex subunit 3</fullName>
        <shortName>SGN3</shortName>
        <shortName>Signalosome subunit 3</shortName>
    </recommendedName>
    <alternativeName>
        <fullName>JAB1-containing signalosome subunit 3</fullName>
    </alternativeName>
</protein>
<gene>
    <name type="primary">COPS3</name>
    <name type="synonym">CSN3</name>
</gene>
<comment type="function">
    <text evidence="5 6 9 10 14">Component of the COP9 signalosome complex (CSN), a complex involved in various cellular and developmental processes. The CSN complex is an essential regulator of the ubiquitin (Ubl) conjugation pathway by mediating the deneddylation of the cullin subunits of SCF-type E3 ligase complexes, leading to decrease the Ubl ligase activity of SCF-type complexes such as SCF, CSA or DDB2. The complex is also involved in phosphorylation of p53/TP53, c-jun/JUN, IkappaBalpha/NFKBIA, ITPK1 and IRF8/ICSBP, possibly via its association with CK2 and PKD kinases. CSN-dependent phosphorylation of TP53 and JUN promotes and protects degradation by the Ubl system, respectively.</text>
</comment>
<comment type="subunit">
    <text evidence="7 8 9 11 12 13">Component of the CSN complex, composed of COPS1/GPS1, COPS2, COPS3, COPS4, COPS5, COPS6, COPS7 (COPS7A or COPS7B), COPS8 and COPS9 isoform 1 (PubMed:18850735, PubMed:26456823). In the complex, it probably interacts directly with COPS1, COPS4, COPS8 and COPS9 isoform 1 (PubMed:18850735, PubMed:26456823). Interacts with CK2 and PKD (PubMed:12628923). Interacts with the translation initiation factor EIF3S6 and IKBKG (PubMed:11418127, PubMed:12220626). Interacts with ERCC6 (PubMed:26030138).</text>
</comment>
<comment type="interaction">
    <interactant intactId="EBI-350590">
        <id>Q9UNS2</id>
    </interactant>
    <interactant intactId="EBI-640741">
        <id>P01023</id>
        <label>A2M</label>
    </interactant>
    <organismsDiffer>false</organismsDiffer>
    <experiments>3</experiments>
</comment>
<comment type="interaction">
    <interactant intactId="EBI-350590">
        <id>Q9UNS2</id>
    </interactant>
    <interactant intactId="EBI-365961">
        <id>P10398</id>
        <label>ARAF</label>
    </interactant>
    <organismsDiffer>false</organismsDiffer>
    <experiments>3</experiments>
</comment>
<comment type="interaction">
    <interactant intactId="EBI-350590">
        <id>Q9UNS2</id>
    </interactant>
    <interactant intactId="EBI-1237085">
        <id>P18085</id>
        <label>ARF4</label>
    </interactant>
    <organismsDiffer>false</organismsDiffer>
    <experiments>3</experiments>
</comment>
<comment type="interaction">
    <interactant intactId="EBI-350590">
        <id>Q9UNS2</id>
    </interactant>
    <interactant intactId="EBI-750475">
        <id>P45381</id>
        <label>ASPA</label>
    </interactant>
    <organismsDiffer>false</organismsDiffer>
    <experiments>3</experiments>
</comment>
<comment type="interaction">
    <interactant intactId="EBI-350590">
        <id>Q9UNS2</id>
    </interactant>
    <interactant intactId="EBI-702390">
        <id>Q9UBB4</id>
        <label>ATXN10</label>
    </interactant>
    <organismsDiffer>false</organismsDiffer>
    <experiments>3</experiments>
</comment>
<comment type="interaction">
    <interactant intactId="EBI-350590">
        <id>Q9UNS2</id>
    </interactant>
    <interactant intactId="EBI-10178113">
        <id>Q96G97-4</id>
        <label>BSCL2</label>
    </interactant>
    <organismsDiffer>false</organismsDiffer>
    <experiments>3</experiments>
</comment>
<comment type="interaction">
    <interactant intactId="EBI-350590">
        <id>Q9UNS2</id>
    </interactant>
    <interactant intactId="EBI-12954949">
        <id>Q9HAS0</id>
        <label>C17orf75</label>
    </interactant>
    <organismsDiffer>false</organismsDiffer>
    <experiments>3</experiments>
</comment>
<comment type="interaction">
    <interactant intactId="EBI-350590">
        <id>Q9UNS2</id>
    </interactant>
    <interactant intactId="EBI-355710">
        <id>P48643</id>
        <label>CCT5</label>
    </interactant>
    <organismsDiffer>false</organismsDiffer>
    <experiments>3</experiments>
</comment>
<comment type="interaction">
    <interactant intactId="EBI-350590">
        <id>Q9UNS2</id>
    </interactant>
    <interactant intactId="EBI-1050386">
        <id>P61201</id>
        <label>COPS2</label>
    </interactant>
    <organismsDiffer>false</organismsDiffer>
    <experiments>13</experiments>
</comment>
<comment type="interaction">
    <interactant intactId="EBI-350590">
        <id>Q9UNS2</id>
    </interactant>
    <interactant intactId="EBI-594661">
        <id>Q92905</id>
        <label>COPS5</label>
    </interactant>
    <organismsDiffer>false</organismsDiffer>
    <experiments>19</experiments>
</comment>
<comment type="interaction">
    <interactant intactId="EBI-350590">
        <id>Q9UNS2</id>
    </interactant>
    <interactant intactId="EBI-486838">
        <id>Q7L5N1</id>
        <label>COPS6</label>
    </interactant>
    <organismsDiffer>false</organismsDiffer>
    <experiments>25</experiments>
</comment>
<comment type="interaction">
    <interactant intactId="EBI-350590">
        <id>Q9UNS2</id>
    </interactant>
    <interactant intactId="EBI-712982">
        <id>Q9UBW8</id>
        <label>COPS7A</label>
    </interactant>
    <organismsDiffer>false</organismsDiffer>
    <experiments>12</experiments>
</comment>
<comment type="interaction">
    <interactant intactId="EBI-350590">
        <id>Q9UNS2</id>
    </interactant>
    <interactant intactId="EBI-2510102">
        <id>Q99627</id>
        <label>COPS8</label>
    </interactant>
    <organismsDiffer>false</organismsDiffer>
    <experiments>17</experiments>
</comment>
<comment type="interaction">
    <interactant intactId="EBI-350590">
        <id>Q9UNS2</id>
    </interactant>
    <interactant intactId="EBI-8589586">
        <id>P09172</id>
        <label>DBH</label>
    </interactant>
    <organismsDiffer>false</organismsDiffer>
    <experiments>3</experiments>
</comment>
<comment type="interaction">
    <interactant intactId="EBI-350590">
        <id>Q9UNS2</id>
    </interactant>
    <interactant intactId="EBI-25840379">
        <id>Q14203-5</id>
        <label>DCTN1</label>
    </interactant>
    <organismsDiffer>false</organismsDiffer>
    <experiments>3</experiments>
</comment>
<comment type="interaction">
    <interactant intactId="EBI-350590">
        <id>Q9UNS2</id>
    </interactant>
    <interactant intactId="EBI-350322">
        <id>Q16531</id>
        <label>DDB1</label>
    </interactant>
    <organismsDiffer>false</organismsDiffer>
    <experiments>3</experiments>
</comment>
<comment type="interaction">
    <interactant intactId="EBI-350590">
        <id>Q9UNS2</id>
    </interactant>
    <interactant intactId="EBI-21603100">
        <id>P26378-2</id>
        <label>ELAVL4</label>
    </interactant>
    <organismsDiffer>false</organismsDiffer>
    <experiments>3</experiments>
</comment>
<comment type="interaction">
    <interactant intactId="EBI-350590">
        <id>Q9UNS2</id>
    </interactant>
    <interactant intactId="EBI-16466949">
        <id>Q13216-2</id>
        <label>ERCC8</label>
    </interactant>
    <organismsDiffer>false</organismsDiffer>
    <experiments>3</experiments>
</comment>
<comment type="interaction">
    <interactant intactId="EBI-350590">
        <id>Q9UNS2</id>
    </interactant>
    <interactant intactId="EBI-11526128">
        <id>Q8NFF5-2</id>
        <label>FLAD1</label>
    </interactant>
    <organismsDiffer>false</organismsDiffer>
    <experiments>3</experiments>
</comment>
<comment type="interaction">
    <interactant intactId="EBI-350590">
        <id>Q9UNS2</id>
    </interactant>
    <interactant intactId="EBI-725515">
        <id>O43559</id>
        <label>FRS3</label>
    </interactant>
    <organismsDiffer>false</organismsDiffer>
    <experiments>3</experiments>
</comment>
<comment type="interaction">
    <interactant intactId="EBI-350590">
        <id>Q9UNS2</id>
    </interactant>
    <interactant intactId="EBI-724143">
        <id>P41250</id>
        <label>GARS1</label>
    </interactant>
    <organismsDiffer>false</organismsDiffer>
    <experiments>3</experiments>
</comment>
<comment type="interaction">
    <interactant intactId="EBI-350590">
        <id>Q9UNS2</id>
    </interactant>
    <interactant intactId="EBI-1955541">
        <id>Q53GS7</id>
        <label>GLE1</label>
    </interactant>
    <organismsDiffer>false</organismsDiffer>
    <experiments>3</experiments>
</comment>
<comment type="interaction">
    <interactant intactId="EBI-350590">
        <id>Q9UNS2</id>
    </interactant>
    <interactant intactId="EBI-747754">
        <id>P28799</id>
        <label>GRN</label>
    </interactant>
    <organismsDiffer>false</organismsDiffer>
    <experiments>3</experiments>
</comment>
<comment type="interaction">
    <interactant intactId="EBI-350590">
        <id>Q9UNS2</id>
    </interactant>
    <interactant intactId="EBI-7133736">
        <id>P07686</id>
        <label>HEXB</label>
    </interactant>
    <organismsDiffer>false</organismsDiffer>
    <experiments>3</experiments>
</comment>
<comment type="interaction">
    <interactant intactId="EBI-350590">
        <id>Q9UNS2</id>
    </interactant>
    <interactant intactId="EBI-12690664">
        <id>P28358</id>
        <label>HOXD10</label>
    </interactant>
    <organismsDiffer>false</organismsDiffer>
    <experiments>3</experiments>
</comment>
<comment type="interaction">
    <interactant intactId="EBI-350590">
        <id>Q9UNS2</id>
    </interactant>
    <interactant intactId="EBI-352682">
        <id>P04792</id>
        <label>HSPB1</label>
    </interactant>
    <organismsDiffer>false</organismsDiffer>
    <experiments>3</experiments>
</comment>
<comment type="interaction">
    <interactant intactId="EBI-350590">
        <id>Q9UNS2</id>
    </interactant>
    <interactant intactId="EBI-466029">
        <id>P42858</id>
        <label>HTT</label>
    </interactant>
    <organismsDiffer>false</organismsDiffer>
    <experiments>22</experiments>
</comment>
<comment type="interaction">
    <interactant intactId="EBI-350590">
        <id>Q9UNS2</id>
    </interactant>
    <interactant intactId="EBI-81279">
        <id>Q9Y6K9</id>
        <label>IKBKG</label>
    </interactant>
    <organismsDiffer>false</organismsDiffer>
    <experiments>2</experiments>
</comment>
<comment type="interaction">
    <interactant intactId="EBI-350590">
        <id>Q9UNS2</id>
    </interactant>
    <interactant intactId="EBI-11999246">
        <id>Q6KB66-2</id>
        <label>KRT80</label>
    </interactant>
    <organismsDiffer>false</organismsDiffer>
    <experiments>3</experiments>
</comment>
<comment type="interaction">
    <interactant intactId="EBI-350590">
        <id>Q9UNS2</id>
    </interactant>
    <interactant intactId="EBI-351953">
        <id>P02545-2</id>
        <label>LMNA</label>
    </interactant>
    <organismsDiffer>false</organismsDiffer>
    <experiments>3</experiments>
</comment>
<comment type="interaction">
    <interactant intactId="EBI-350590">
        <id>Q9UNS2</id>
    </interactant>
    <interactant intactId="EBI-1189067">
        <id>P51608</id>
        <label>MECP2</label>
    </interactant>
    <organismsDiffer>false</organismsDiffer>
    <experiments>3</experiments>
</comment>
<comment type="interaction">
    <interactant intactId="EBI-350590">
        <id>Q9UNS2</id>
    </interactant>
    <interactant intactId="EBI-2889252">
        <id>Q96AH0</id>
        <label>NABP1</label>
    </interactant>
    <organismsDiffer>false</organismsDiffer>
    <experiments>3</experiments>
</comment>
<comment type="interaction">
    <interactant intactId="EBI-350590">
        <id>Q9UNS2</id>
    </interactant>
    <interactant intactId="EBI-713665">
        <id>P19404</id>
        <label>NDUFV2</label>
    </interactant>
    <organismsDiffer>false</organismsDiffer>
    <experiments>3</experiments>
</comment>
<comment type="interaction">
    <interactant intactId="EBI-350590">
        <id>Q9UNS2</id>
    </interactant>
    <interactant intactId="EBI-1014472">
        <id>P35240</id>
        <label>NF2</label>
    </interactant>
    <organismsDiffer>false</organismsDiffer>
    <experiments>3</experiments>
</comment>
<comment type="interaction">
    <interactant intactId="EBI-350590">
        <id>Q9UNS2</id>
    </interactant>
    <interactant intactId="EBI-1391623">
        <id>P29474</id>
        <label>NOS3</label>
    </interactant>
    <organismsDiffer>false</organismsDiffer>
    <experiments>3</experiments>
</comment>
<comment type="interaction">
    <interactant intactId="EBI-350590">
        <id>Q9UNS2</id>
    </interactant>
    <interactant intactId="EBI-25929070">
        <id>Q9BZ23-2</id>
        <label>PANK2</label>
    </interactant>
    <organismsDiffer>false</organismsDiffer>
    <experiments>3</experiments>
</comment>
<comment type="interaction">
    <interactant intactId="EBI-350590">
        <id>Q9UNS2</id>
    </interactant>
    <interactant intactId="EBI-988601">
        <id>O43933</id>
        <label>PEX1</label>
    </interactant>
    <organismsDiffer>false</organismsDiffer>
    <experiments>3</experiments>
</comment>
<comment type="interaction">
    <interactant intactId="EBI-350590">
        <id>Q9UNS2</id>
    </interactant>
    <interactant intactId="EBI-752057">
        <id>Q7Z412</id>
        <label>PEX26</label>
    </interactant>
    <organismsDiffer>false</organismsDiffer>
    <experiments>3</experiments>
</comment>
<comment type="interaction">
    <interactant intactId="EBI-350590">
        <id>Q9UNS2</id>
    </interactant>
    <interactant intactId="EBI-721853">
        <id>O14832</id>
        <label>PHYH</label>
    </interactant>
    <organismsDiffer>false</organismsDiffer>
    <experiments>3</experiments>
</comment>
<comment type="interaction">
    <interactant intactId="EBI-350590">
        <id>Q9UNS2</id>
    </interactant>
    <interactant intactId="EBI-21251460">
        <id>O60260-5</id>
        <label>PRKN</label>
    </interactant>
    <organismsDiffer>false</organismsDiffer>
    <experiments>3</experiments>
</comment>
<comment type="interaction">
    <interactant intactId="EBI-350590">
        <id>Q9UNS2</id>
    </interactant>
    <interactant intactId="EBI-752074">
        <id>P41219</id>
        <label>PRPH</label>
    </interactant>
    <organismsDiffer>false</organismsDiffer>
    <experiments>3</experiments>
</comment>
<comment type="interaction">
    <interactant intactId="EBI-350590">
        <id>Q9UNS2</id>
    </interactant>
    <interactant intactId="EBI-7280826">
        <id>Q8TBF2</id>
        <label>PRXL2B</label>
    </interactant>
    <organismsDiffer>false</organismsDiffer>
    <experiments>5</experiments>
</comment>
<comment type="interaction">
    <interactant intactId="EBI-350590">
        <id>Q9UNS2</id>
    </interactant>
    <interactant intactId="EBI-1056089">
        <id>P51149</id>
        <label>RAB7A</label>
    </interactant>
    <organismsDiffer>false</organismsDiffer>
    <experiments>3</experiments>
</comment>
<comment type="interaction">
    <interactant intactId="EBI-350590">
        <id>Q9UNS2</id>
    </interactant>
    <interactant intactId="EBI-396669">
        <id>Q9Y3C5</id>
        <label>RNF11</label>
    </interactant>
    <organismsDiffer>false</organismsDiffer>
    <experiments>3</experiments>
</comment>
<comment type="interaction">
    <interactant intactId="EBI-350590">
        <id>Q9UNS2</id>
    </interactant>
    <interactant intactId="EBI-985879">
        <id>P37840</id>
        <label>SNCA</label>
    </interactant>
    <organismsDiffer>false</organismsDiffer>
    <experiments>3</experiments>
</comment>
<comment type="interaction">
    <interactant intactId="EBI-350590">
        <id>Q9UNS2</id>
    </interactant>
    <interactant intactId="EBI-727106">
        <id>Q16143</id>
        <label>SNCB</label>
    </interactant>
    <organismsDiffer>false</organismsDiffer>
    <experiments>3</experiments>
</comment>
<comment type="interaction">
    <interactant intactId="EBI-350590">
        <id>Q9UNS2</id>
    </interactant>
    <interactant intactId="EBI-297487">
        <id>Q07889</id>
        <label>SOS1</label>
    </interactant>
    <organismsDiffer>false</organismsDiffer>
    <experiments>3</experiments>
</comment>
<comment type="interaction">
    <interactant intactId="EBI-350590">
        <id>Q9UNS2</id>
    </interactant>
    <interactant intactId="EBI-524257">
        <id>O14656</id>
        <label>TOR1A</label>
    </interactant>
    <organismsDiffer>false</organismsDiffer>
    <experiments>3</experiments>
</comment>
<comment type="interaction">
    <interactant intactId="EBI-350590">
        <id>Q9UNS2</id>
    </interactant>
    <interactant intactId="EBI-25930156">
        <id>Q6IQ55-3</id>
        <label>TTBK2</label>
    </interactant>
    <organismsDiffer>false</organismsDiffer>
    <experiments>3</experiments>
</comment>
<comment type="interaction">
    <interactant intactId="EBI-350590">
        <id>Q9UNS2</id>
    </interactant>
    <interactant intactId="EBI-711909">
        <id>P02766</id>
        <label>TTR</label>
    </interactant>
    <organismsDiffer>false</organismsDiffer>
    <experiments>3</experiments>
</comment>
<comment type="interaction">
    <interactant intactId="EBI-350590">
        <id>Q9UNS2</id>
    </interactant>
    <interactant intactId="EBI-714860">
        <id>P09936</id>
        <label>UCHL1</label>
    </interactant>
    <organismsDiffer>false</organismsDiffer>
    <experiments>3</experiments>
</comment>
<comment type="interaction">
    <interactant intactId="EBI-350590">
        <id>Q9UNS2</id>
    </interactant>
    <interactant intactId="EBI-1048893">
        <id>P54577</id>
        <label>YARS1</label>
    </interactant>
    <organismsDiffer>false</organismsDiffer>
    <experiments>3</experiments>
</comment>
<comment type="subcellular location">
    <subcellularLocation>
        <location evidence="14">Cytoplasm</location>
    </subcellularLocation>
    <subcellularLocation>
        <location evidence="14">Nucleus</location>
    </subcellularLocation>
</comment>
<comment type="alternative products">
    <event type="alternative splicing"/>
    <isoform>
        <id>Q9UNS2-1</id>
        <name>1</name>
        <sequence type="displayed"/>
    </isoform>
    <isoform>
        <id>Q9UNS2-2</id>
        <name>2</name>
        <sequence type="described" ref="VSP_044271"/>
    </isoform>
</comment>
<comment type="tissue specificity">
    <text evidence="4">Widely expressed. Expressed at high level in heart and skeletal muscle.</text>
</comment>
<comment type="miscellaneous">
    <text>Amplified and overexpressed in some osteosarcomas (OS), suggesting that it may participate in TP53 degradation in OS.</text>
</comment>
<comment type="similarity">
    <text evidence="17">Belongs to the CSN3 family.</text>
</comment>
<comment type="sequence caution" evidence="17">
    <conflict type="frameshift">
        <sequence resource="EMBL-CDS" id="AAC14197"/>
    </conflict>
</comment>
<keyword id="KW-0002">3D-structure</keyword>
<keyword id="KW-0007">Acetylation</keyword>
<keyword id="KW-0025">Alternative splicing</keyword>
<keyword id="KW-0963">Cytoplasm</keyword>
<keyword id="KW-0903">Direct protein sequencing</keyword>
<keyword id="KW-0539">Nucleus</keyword>
<keyword id="KW-0597">Phosphoprotein</keyword>
<keyword id="KW-1267">Proteomics identification</keyword>
<keyword id="KW-1185">Reference proteome</keyword>
<keyword id="KW-0736">Signalosome</keyword>
<feature type="initiator methionine" description="Removed" evidence="11 15 19 22 23">
    <location>
        <position position="1"/>
    </location>
</feature>
<feature type="chain" id="PRO_0000120978" description="COP9 signalosome complex subunit 3">
    <location>
        <begin position="2"/>
        <end position="423"/>
    </location>
</feature>
<feature type="domain" description="PCI" evidence="2">
    <location>
        <begin position="197"/>
        <end position="365"/>
    </location>
</feature>
<feature type="region of interest" description="Disordered" evidence="3">
    <location>
        <begin position="402"/>
        <end position="423"/>
    </location>
</feature>
<feature type="modified residue" description="N-acetylalanine" evidence="11 15 19 22 23">
    <location>
        <position position="2"/>
    </location>
</feature>
<feature type="modified residue" description="Phosphoserine" evidence="1">
    <location>
        <position position="407"/>
    </location>
</feature>
<feature type="modified residue" description="Phosphoserine" evidence="18 24">
    <location>
        <position position="410"/>
    </location>
</feature>
<feature type="modified residue" description="Phosphoserine" evidence="11 18 20 21">
    <location>
        <position position="423"/>
    </location>
</feature>
<feature type="splice variant" id="VSP_044271" description="In isoform 2." evidence="16">
    <location>
        <begin position="1"/>
        <end position="20"/>
    </location>
</feature>
<accession>Q9UNS2</accession>
<accession>B2R683</accession>
<accession>B4DY81</accession>
<accession>O43191</accession>
<accession>Q7LDR6</accession>